<feature type="chain" id="PRO_1000072208" description="Acyl-[acyl-carrier-protein]--UDP-N-acetylglucosamine O-acyltransferase">
    <location>
        <begin position="1"/>
        <end position="262"/>
    </location>
</feature>
<accession>A5F628</accession>
<accession>C3M3K5</accession>
<sequence>MIHETAQIHPTSVVEEGAIIGANVKIGPFCFVDSKVEIGEGTELLSHVVVKGPTKIGRFNRIFQFASIGEACQDLKYAGEDTQLIIGDRNTIRESVTMHRGTVQDKGITIVGSDNLFMINAHVAHDCVIGDRCIFANNATLAGHVKVGNQAIVGGMSAIHQFCHIGDHCMLGGGSIVVQDVPPYVMAQGNHCAPFGINVEGLKRRGFDKAEIHAIRRAYKSLYRNGLTLEAAKAEIAQEAEQYPSVKLFLDFLEKSERGIIR</sequence>
<gene>
    <name evidence="1" type="primary">lpxA</name>
    <name type="ordered locus">VC0395_A1839</name>
    <name type="ordered locus">VC395_2364</name>
</gene>
<evidence type="ECO:0000255" key="1">
    <source>
        <dbReference type="HAMAP-Rule" id="MF_00387"/>
    </source>
</evidence>
<name>LPXA_VIBC3</name>
<comment type="function">
    <text evidence="1">Involved in the biosynthesis of lipid A, a phosphorylated glycolipid that anchors the lipopolysaccharide to the outer membrane of the cell.</text>
</comment>
<comment type="catalytic activity">
    <reaction evidence="1">
        <text>a (3R)-hydroxyacyl-[ACP] + UDP-N-acetyl-alpha-D-glucosamine = a UDP-3-O-[(3R)-3-hydroxyacyl]-N-acetyl-alpha-D-glucosamine + holo-[ACP]</text>
        <dbReference type="Rhea" id="RHEA:67812"/>
        <dbReference type="Rhea" id="RHEA-COMP:9685"/>
        <dbReference type="Rhea" id="RHEA-COMP:9945"/>
        <dbReference type="ChEBI" id="CHEBI:57705"/>
        <dbReference type="ChEBI" id="CHEBI:64479"/>
        <dbReference type="ChEBI" id="CHEBI:78827"/>
        <dbReference type="ChEBI" id="CHEBI:173225"/>
        <dbReference type="EC" id="2.3.1.129"/>
    </reaction>
</comment>
<comment type="pathway">
    <text evidence="1">Glycolipid biosynthesis; lipid IV(A) biosynthesis; lipid IV(A) from (3R)-3-hydroxytetradecanoyl-[acyl-carrier-protein] and UDP-N-acetyl-alpha-D-glucosamine: step 1/6.</text>
</comment>
<comment type="subunit">
    <text evidence="1">Homotrimer.</text>
</comment>
<comment type="subcellular location">
    <subcellularLocation>
        <location evidence="1">Cytoplasm</location>
    </subcellularLocation>
</comment>
<comment type="similarity">
    <text evidence="1">Belongs to the transferase hexapeptide repeat family. LpxA subfamily.</text>
</comment>
<protein>
    <recommendedName>
        <fullName evidence="1">Acyl-[acyl-carrier-protein]--UDP-N-acetylglucosamine O-acyltransferase</fullName>
        <shortName evidence="1">UDP-N-acetylglucosamine acyltransferase</shortName>
        <ecNumber evidence="1">2.3.1.129</ecNumber>
    </recommendedName>
</protein>
<reference key="1">
    <citation type="submission" date="2007-03" db="EMBL/GenBank/DDBJ databases">
        <authorList>
            <person name="Heidelberg J."/>
        </authorList>
    </citation>
    <scope>NUCLEOTIDE SEQUENCE [LARGE SCALE GENOMIC DNA]</scope>
    <source>
        <strain>ATCC 39541 / Classical Ogawa 395 / O395</strain>
    </source>
</reference>
<reference key="2">
    <citation type="journal article" date="2008" name="PLoS ONE">
        <title>A recalibrated molecular clock and independent origins for the cholera pandemic clones.</title>
        <authorList>
            <person name="Feng L."/>
            <person name="Reeves P.R."/>
            <person name="Lan R."/>
            <person name="Ren Y."/>
            <person name="Gao C."/>
            <person name="Zhou Z."/>
            <person name="Ren Y."/>
            <person name="Cheng J."/>
            <person name="Wang W."/>
            <person name="Wang J."/>
            <person name="Qian W."/>
            <person name="Li D."/>
            <person name="Wang L."/>
        </authorList>
    </citation>
    <scope>NUCLEOTIDE SEQUENCE [LARGE SCALE GENOMIC DNA]</scope>
    <source>
        <strain>ATCC 39541 / Classical Ogawa 395 / O395</strain>
    </source>
</reference>
<organism>
    <name type="scientific">Vibrio cholerae serotype O1 (strain ATCC 39541 / Classical Ogawa 395 / O395)</name>
    <dbReference type="NCBI Taxonomy" id="345073"/>
    <lineage>
        <taxon>Bacteria</taxon>
        <taxon>Pseudomonadati</taxon>
        <taxon>Pseudomonadota</taxon>
        <taxon>Gammaproteobacteria</taxon>
        <taxon>Vibrionales</taxon>
        <taxon>Vibrionaceae</taxon>
        <taxon>Vibrio</taxon>
    </lineage>
</organism>
<dbReference type="EC" id="2.3.1.129" evidence="1"/>
<dbReference type="EMBL" id="CP000627">
    <property type="protein sequence ID" value="ABQ21110.1"/>
    <property type="molecule type" value="Genomic_DNA"/>
</dbReference>
<dbReference type="EMBL" id="CP001235">
    <property type="protein sequence ID" value="ACP10354.1"/>
    <property type="molecule type" value="Genomic_DNA"/>
</dbReference>
<dbReference type="RefSeq" id="WP_000581103.1">
    <property type="nucleotide sequence ID" value="NZ_JAACZH010000008.1"/>
</dbReference>
<dbReference type="SMR" id="A5F628"/>
<dbReference type="GeneID" id="89513757"/>
<dbReference type="KEGG" id="vco:VC0395_A1839"/>
<dbReference type="KEGG" id="vcr:VC395_2364"/>
<dbReference type="PATRIC" id="fig|345073.21.peg.2279"/>
<dbReference type="eggNOG" id="COG1043">
    <property type="taxonomic scope" value="Bacteria"/>
</dbReference>
<dbReference type="HOGENOM" id="CLU_061249_0_1_6"/>
<dbReference type="OrthoDB" id="9807278at2"/>
<dbReference type="UniPathway" id="UPA00359">
    <property type="reaction ID" value="UER00477"/>
</dbReference>
<dbReference type="Proteomes" id="UP000000249">
    <property type="component" value="Chromosome 2"/>
</dbReference>
<dbReference type="GO" id="GO:0005737">
    <property type="term" value="C:cytoplasm"/>
    <property type="evidence" value="ECO:0007669"/>
    <property type="project" value="UniProtKB-SubCell"/>
</dbReference>
<dbReference type="GO" id="GO:0016020">
    <property type="term" value="C:membrane"/>
    <property type="evidence" value="ECO:0007669"/>
    <property type="project" value="GOC"/>
</dbReference>
<dbReference type="GO" id="GO:0008780">
    <property type="term" value="F:acyl-[acyl-carrier-protein]-UDP-N-acetylglucosamine O-acyltransferase activity"/>
    <property type="evidence" value="ECO:0007669"/>
    <property type="project" value="UniProtKB-UniRule"/>
</dbReference>
<dbReference type="GO" id="GO:0009245">
    <property type="term" value="P:lipid A biosynthetic process"/>
    <property type="evidence" value="ECO:0007669"/>
    <property type="project" value="UniProtKB-UniRule"/>
</dbReference>
<dbReference type="CDD" id="cd03351">
    <property type="entry name" value="LbH_UDP-GlcNAc_AT"/>
    <property type="match status" value="1"/>
</dbReference>
<dbReference type="FunFam" id="2.160.10.10:FF:000003">
    <property type="entry name" value="Acyl-[acyl-carrier-protein]--UDP-N-acetylglucosamine O-acyltransferase"/>
    <property type="match status" value="1"/>
</dbReference>
<dbReference type="Gene3D" id="2.160.10.10">
    <property type="entry name" value="Hexapeptide repeat proteins"/>
    <property type="match status" value="1"/>
</dbReference>
<dbReference type="Gene3D" id="1.20.1180.10">
    <property type="entry name" value="Udp N-acetylglucosamine O-acyltransferase, C-terminal domain"/>
    <property type="match status" value="1"/>
</dbReference>
<dbReference type="HAMAP" id="MF_00387">
    <property type="entry name" value="LpxA"/>
    <property type="match status" value="1"/>
</dbReference>
<dbReference type="InterPro" id="IPR029098">
    <property type="entry name" value="Acetyltransf_C"/>
</dbReference>
<dbReference type="InterPro" id="IPR037157">
    <property type="entry name" value="Acetyltransf_C_sf"/>
</dbReference>
<dbReference type="InterPro" id="IPR001451">
    <property type="entry name" value="Hexapep"/>
</dbReference>
<dbReference type="InterPro" id="IPR018357">
    <property type="entry name" value="Hexapep_transf_CS"/>
</dbReference>
<dbReference type="InterPro" id="IPR010137">
    <property type="entry name" value="Lipid_A_LpxA"/>
</dbReference>
<dbReference type="InterPro" id="IPR011004">
    <property type="entry name" value="Trimer_LpxA-like_sf"/>
</dbReference>
<dbReference type="NCBIfam" id="TIGR01852">
    <property type="entry name" value="lipid_A_lpxA"/>
    <property type="match status" value="1"/>
</dbReference>
<dbReference type="NCBIfam" id="NF003657">
    <property type="entry name" value="PRK05289.1"/>
    <property type="match status" value="1"/>
</dbReference>
<dbReference type="PANTHER" id="PTHR43480">
    <property type="entry name" value="ACYL-[ACYL-CARRIER-PROTEIN]--UDP-N-ACETYLGLUCOSAMINE O-ACYLTRANSFERASE"/>
    <property type="match status" value="1"/>
</dbReference>
<dbReference type="PANTHER" id="PTHR43480:SF1">
    <property type="entry name" value="ACYL-[ACYL-CARRIER-PROTEIN]--UDP-N-ACETYLGLUCOSAMINE O-ACYLTRANSFERASE, MITOCHONDRIAL-RELATED"/>
    <property type="match status" value="1"/>
</dbReference>
<dbReference type="Pfam" id="PF13720">
    <property type="entry name" value="Acetyltransf_11"/>
    <property type="match status" value="1"/>
</dbReference>
<dbReference type="Pfam" id="PF00132">
    <property type="entry name" value="Hexapep"/>
    <property type="match status" value="2"/>
</dbReference>
<dbReference type="PIRSF" id="PIRSF000456">
    <property type="entry name" value="UDP-GlcNAc_acltr"/>
    <property type="match status" value="1"/>
</dbReference>
<dbReference type="SUPFAM" id="SSF51161">
    <property type="entry name" value="Trimeric LpxA-like enzymes"/>
    <property type="match status" value="1"/>
</dbReference>
<dbReference type="PROSITE" id="PS00101">
    <property type="entry name" value="HEXAPEP_TRANSFERASES"/>
    <property type="match status" value="1"/>
</dbReference>
<keyword id="KW-0012">Acyltransferase</keyword>
<keyword id="KW-0963">Cytoplasm</keyword>
<keyword id="KW-0441">Lipid A biosynthesis</keyword>
<keyword id="KW-0444">Lipid biosynthesis</keyword>
<keyword id="KW-0443">Lipid metabolism</keyword>
<keyword id="KW-0677">Repeat</keyword>
<keyword id="KW-0808">Transferase</keyword>
<proteinExistence type="inferred from homology"/>